<accession>P01520</accession>
<dbReference type="PIR" id="A01783">
    <property type="entry name" value="NTKN2G"/>
</dbReference>
<dbReference type="ConoServer" id="24">
    <property type="toxin name" value="GII"/>
</dbReference>
<dbReference type="GO" id="GO:0005576">
    <property type="term" value="C:extracellular region"/>
    <property type="evidence" value="ECO:0007669"/>
    <property type="project" value="UniProtKB-SubCell"/>
</dbReference>
<dbReference type="GO" id="GO:0035792">
    <property type="term" value="C:host cell postsynaptic membrane"/>
    <property type="evidence" value="ECO:0007669"/>
    <property type="project" value="UniProtKB-KW"/>
</dbReference>
<dbReference type="GO" id="GO:0030550">
    <property type="term" value="F:acetylcholine receptor inhibitor activity"/>
    <property type="evidence" value="ECO:0007669"/>
    <property type="project" value="UniProtKB-KW"/>
</dbReference>
<dbReference type="GO" id="GO:0099106">
    <property type="term" value="F:ion channel regulator activity"/>
    <property type="evidence" value="ECO:0007669"/>
    <property type="project" value="UniProtKB-KW"/>
</dbReference>
<dbReference type="GO" id="GO:0090729">
    <property type="term" value="F:toxin activity"/>
    <property type="evidence" value="ECO:0007669"/>
    <property type="project" value="UniProtKB-KW"/>
</dbReference>
<dbReference type="InterPro" id="IPR018072">
    <property type="entry name" value="Conotoxin_a-typ_CS"/>
</dbReference>
<dbReference type="PROSITE" id="PS60014">
    <property type="entry name" value="ALPHA_CONOTOXIN"/>
    <property type="match status" value="1"/>
</dbReference>
<feature type="peptide" id="PRO_0000044460" description="Alpha-conotoxin GII">
    <location>
        <begin position="1"/>
        <end position="13"/>
    </location>
</feature>
<feature type="modified residue" description="Cysteine amide" evidence="2">
    <location>
        <position position="13"/>
    </location>
</feature>
<feature type="disulfide bond" evidence="1">
    <location>
        <begin position="2"/>
        <end position="7"/>
    </location>
</feature>
<feature type="disulfide bond" evidence="1">
    <location>
        <begin position="3"/>
        <end position="13"/>
    </location>
</feature>
<protein>
    <recommendedName>
        <fullName>Alpha-conotoxin GII</fullName>
    </recommendedName>
</protein>
<reference key="1">
    <citation type="journal article" date="1981" name="J. Biol. Chem.">
        <title>Peptide toxins from Conus geographus venom.</title>
        <authorList>
            <person name="Gray W.R."/>
            <person name="Luque A."/>
            <person name="Olivera B.M."/>
            <person name="Barrett J."/>
            <person name="Cruz L.J."/>
        </authorList>
    </citation>
    <scope>PROTEIN SEQUENCE</scope>
    <scope>AMIDATION AT CYS-13</scope>
    <source>
        <tissue>Venom</tissue>
    </source>
</reference>
<comment type="function">
    <text>Alpha-conotoxins act on postsynaptic membranes, they bind to the nicotinic acetylcholine receptors (nAChR) and thus inhibit them.</text>
</comment>
<comment type="subcellular location">
    <subcellularLocation>
        <location>Secreted</location>
    </subcellularLocation>
</comment>
<comment type="tissue specificity">
    <text>Expressed by the venom duct.</text>
</comment>
<comment type="domain">
    <text>The cysteine framework is I (CC-C-C). Alpha3/5 pattern.</text>
</comment>
<comment type="similarity">
    <text evidence="3">Belongs to the conotoxin A superfamily.</text>
</comment>
<sequence>ECCHPACGKHFSC</sequence>
<organism>
    <name type="scientific">Conus geographus</name>
    <name type="common">Geography cone</name>
    <name type="synonym">Nubecula geographus</name>
    <dbReference type="NCBI Taxonomy" id="6491"/>
    <lineage>
        <taxon>Eukaryota</taxon>
        <taxon>Metazoa</taxon>
        <taxon>Spiralia</taxon>
        <taxon>Lophotrochozoa</taxon>
        <taxon>Mollusca</taxon>
        <taxon>Gastropoda</taxon>
        <taxon>Caenogastropoda</taxon>
        <taxon>Neogastropoda</taxon>
        <taxon>Conoidea</taxon>
        <taxon>Conidae</taxon>
        <taxon>Conus</taxon>
        <taxon>Gastridium</taxon>
    </lineage>
</organism>
<evidence type="ECO:0000250" key="1">
    <source>
        <dbReference type="UniProtKB" id="P01519"/>
    </source>
</evidence>
<evidence type="ECO:0000269" key="2">
    <source>
    </source>
</evidence>
<evidence type="ECO:0000305" key="3"/>
<name>CA12_CONGE</name>
<keyword id="KW-0008">Acetylcholine receptor inhibiting toxin</keyword>
<keyword id="KW-0027">Amidation</keyword>
<keyword id="KW-0903">Direct protein sequencing</keyword>
<keyword id="KW-1015">Disulfide bond</keyword>
<keyword id="KW-0872">Ion channel impairing toxin</keyword>
<keyword id="KW-0528">Neurotoxin</keyword>
<keyword id="KW-0629">Postsynaptic neurotoxin</keyword>
<keyword id="KW-0964">Secreted</keyword>
<keyword id="KW-0800">Toxin</keyword>
<proteinExistence type="evidence at protein level"/>